<name>MCP_IIV6</name>
<organism>
    <name type="scientific">Invertebrate iridescent virus 6</name>
    <name type="common">IIV-6</name>
    <name type="synonym">Chilo iridescent virus</name>
    <dbReference type="NCBI Taxonomy" id="176652"/>
    <lineage>
        <taxon>Viruses</taxon>
        <taxon>Varidnaviria</taxon>
        <taxon>Bamfordvirae</taxon>
        <taxon>Nucleocytoviricota</taxon>
        <taxon>Megaviricetes</taxon>
        <taxon>Pimascovirales</taxon>
        <taxon>Iridoviridae</taxon>
        <taxon>Betairidovirinae</taxon>
        <taxon>Iridovirus</taxon>
    </lineage>
</organism>
<organismHost>
    <name type="scientific">Acheta domesticus</name>
    <name type="common">House cricket</name>
    <dbReference type="NCBI Taxonomy" id="6997"/>
</organismHost>
<organismHost>
    <name type="scientific">Chilo suppressalis</name>
    <name type="common">Asiatic rice borer moth</name>
    <dbReference type="NCBI Taxonomy" id="168631"/>
</organismHost>
<organismHost>
    <name type="scientific">Gryllus bimaculatus</name>
    <name type="common">Two-spotted cricket</name>
    <dbReference type="NCBI Taxonomy" id="6999"/>
</organismHost>
<organismHost>
    <name type="scientific">Gryllus campestris</name>
    <dbReference type="NCBI Taxonomy" id="58607"/>
</organismHost>
<organismHost>
    <name type="scientific">Spodoptera frugiperda</name>
    <name type="common">Fall armyworm</name>
    <dbReference type="NCBI Taxonomy" id="7108"/>
</organismHost>
<accession>Q05815</accession>
<comment type="function">
    <text evidence="1">Major capsid protein that self assembles to form an icosahedral capsid with a T=147 symmetry. Represents around 50% of the total virion protein mass.</text>
</comment>
<comment type="subunit">
    <text evidence="2">Homotrimer.</text>
</comment>
<comment type="subcellular location">
    <subcellularLocation>
        <location evidence="1">Virion</location>
    </subcellularLocation>
</comment>
<comment type="similarity">
    <text evidence="2">Belongs to the NCLDV major capsid protein family.</text>
</comment>
<reference key="1">
    <citation type="journal article" date="1993" name="J. Gen. Virol.">
        <title>Identification of the gene encoding the major capsid protein of insect iridescent virus type 6 by polymerase chain reaction.</title>
        <authorList>
            <person name="Stohwasser R."/>
            <person name="Raab K."/>
            <person name="Schnitzler P."/>
            <person name="Janssen W."/>
            <person name="Darai G."/>
        </authorList>
    </citation>
    <scope>NUCLEOTIDE SEQUENCE [GENOMIC DNA]</scope>
</reference>
<reference key="2">
    <citation type="journal article" date="2001" name="Virology">
        <title>Analysis of the first complete DNA sequence of an invertebrate iridovirus: coding strategy of the genome of Chilo iridescent virus.</title>
        <authorList>
            <person name="Jakob N.J."/>
            <person name="Mueller K."/>
            <person name="Bahr U."/>
            <person name="Darai G."/>
        </authorList>
    </citation>
    <scope>NUCLEOTIDE SEQUENCE [LARGE SCALE GENOMIC DNA]</scope>
</reference>
<reference key="3">
    <citation type="journal article" date="2007" name="Virol. J.">
        <title>Comparative genomic analysis of the family Iridoviridae: re-annotating and defining the core set of iridovirus genes.</title>
        <authorList>
            <person name="Eaton H.E."/>
            <person name="Metcalf J."/>
            <person name="Penny E."/>
            <person name="Tcherepanov V."/>
            <person name="Upton C."/>
            <person name="Brunetti C.R."/>
        </authorList>
    </citation>
    <scope>GENOME REANNOTATION</scope>
</reference>
<reference key="4">
    <citation type="journal article" date="2009" name="J. Mol. Biol.">
        <title>The capsid proteins of a large, icosahedral dsDNA virus.</title>
        <authorList>
            <person name="Yan X."/>
            <person name="Yu Z."/>
            <person name="Zhang P."/>
            <person name="Battisti A.J."/>
            <person name="Holdaway H.A."/>
            <person name="Chipman P.R."/>
            <person name="Bajaj C."/>
            <person name="Bergoin M."/>
            <person name="Rossmann M.G."/>
            <person name="Baker T.S."/>
        </authorList>
    </citation>
    <scope>STRUCTURE BY ELECTRON MICROSCOPY OF THE CAPSID</scope>
    <scope>FUNCTION</scope>
    <scope>SUBCELLULAR LOCATION</scope>
</reference>
<feature type="chain" id="PRO_0000222381" description="Major capsid protein">
    <location>
        <begin position="1"/>
        <end position="467"/>
    </location>
</feature>
<feature type="sequence conflict" description="In Ref. 1." evidence="2" ref="1">
    <original>S</original>
    <variation>Y</variation>
    <location>
        <position position="328"/>
    </location>
</feature>
<feature type="sequence conflict" description="In Ref. 1." evidence="2" ref="1">
    <original>I</original>
    <variation>L</variation>
    <location>
        <position position="331"/>
    </location>
</feature>
<proteinExistence type="evidence at protein level"/>
<keyword id="KW-0167">Capsid protein</keyword>
<keyword id="KW-0426">Late protein</keyword>
<keyword id="KW-1185">Reference proteome</keyword>
<keyword id="KW-1149">T=147 icosahedral capsid protein</keyword>
<keyword id="KW-0946">Virion</keyword>
<evidence type="ECO:0000269" key="1">
    <source>
    </source>
</evidence>
<evidence type="ECO:0000305" key="2"/>
<dbReference type="EMBL" id="AF303741">
    <property type="protein sequence ID" value="AAK82135.1"/>
    <property type="molecule type" value="Genomic_DNA"/>
</dbReference>
<dbReference type="PIR" id="JQ2215">
    <property type="entry name" value="JQ2215"/>
</dbReference>
<dbReference type="RefSeq" id="NP_149737.1">
    <property type="nucleotide sequence ID" value="NC_003038.1"/>
</dbReference>
<dbReference type="SMR" id="Q05815"/>
<dbReference type="KEGG" id="vg:1733341"/>
<dbReference type="OrthoDB" id="5386at10239"/>
<dbReference type="Proteomes" id="UP000001359">
    <property type="component" value="Genome"/>
</dbReference>
<dbReference type="GO" id="GO:0039627">
    <property type="term" value="C:T=147 icosahedral capsid"/>
    <property type="evidence" value="ECO:0000314"/>
    <property type="project" value="UniProtKB"/>
</dbReference>
<dbReference type="GO" id="GO:0005198">
    <property type="term" value="F:structural molecule activity"/>
    <property type="evidence" value="ECO:0007669"/>
    <property type="project" value="InterPro"/>
</dbReference>
<dbReference type="Gene3D" id="2.70.9.10">
    <property type="entry name" value="Adenovirus Type 2 Hexon, domain 4"/>
    <property type="match status" value="1"/>
</dbReference>
<dbReference type="Gene3D" id="2.70.9.20">
    <property type="entry name" value="Major capsid protein Vp54"/>
    <property type="match status" value="1"/>
</dbReference>
<dbReference type="InterPro" id="IPR031654">
    <property type="entry name" value="Capsid_N"/>
</dbReference>
<dbReference type="InterPro" id="IPR007542">
    <property type="entry name" value="MCP_C"/>
</dbReference>
<dbReference type="InterPro" id="IPR038519">
    <property type="entry name" value="MCP_C_sf"/>
</dbReference>
<dbReference type="InterPro" id="IPR016112">
    <property type="entry name" value="VP_dsDNA_II"/>
</dbReference>
<dbReference type="Pfam" id="PF16903">
    <property type="entry name" value="Capsid_N"/>
    <property type="match status" value="1"/>
</dbReference>
<dbReference type="Pfam" id="PF04451">
    <property type="entry name" value="Capsid_NCLDV"/>
    <property type="match status" value="1"/>
</dbReference>
<dbReference type="SUPFAM" id="SSF49749">
    <property type="entry name" value="Group II dsDNA viruses VP"/>
    <property type="match status" value="2"/>
</dbReference>
<protein>
    <recommendedName>
        <fullName>Major capsid protein</fullName>
        <shortName>MCP</shortName>
    </recommendedName>
    <alternativeName>
        <fullName>P50</fullName>
    </alternativeName>
</protein>
<sequence length="467" mass="51322">MSISSSNVTSGFIDIATKDEIEKYMYGGKTSTAYFVRETRKATWFTQVPVSLTRANGSANFGSEWSASISRAGDYLLYTWLRVRIPSVTLLSTNQFGANGRIRWCRNFMHNLIRECSITFNDLVAARFDHYHLDFWAAFTTPASKAVGYDNMIGNVSALIQPQPVPVAPATVSLPEADLNLPLPFFFSRDSGVALPTAALPYNEMRINFQFHDWQRLLILDNIAAVASQTVVPVVGATSDIATAPVLHHGTVWGNYAIVSNEERRRMGCSVRDILVEQVQTAPRHVWNPTTNDAPNYDIRFSHAIKALFFAVRNTTFSNQPSNYTTASPVITSTTVILEPSTGAFDPIHHTTLIYENTNRLNHMGSDYFSLVNPWYHAPTIPGLTGFHEYSYSLAFNEIDPMGSTNYGKLTNISIVPTASPAAKVGAAGTGPAGSGQNFPQTFEFIVTALNNNIIRISGGALGFPVL</sequence>
<gene>
    <name type="primary">MCP</name>
    <name type="ORF">IIV-6 274L</name>
</gene>